<sequence>MNFQAGGGQSPQQQQQLAGGPPQQFALSNSAAIRAEIQRFESVHPNIYAIYDLIERIEDLALQNQIREHVISIEDSFVNSQEWTLSRSVPELKVGIVGNLSSGKSALVHRYLTGTYVQEESPEGGRFKKEIVVDGQSYLLLIRDEGGPPELQFAAWVDAVVFVFSLEDEISFQTVYNYFLRLCSFRNASEVPMVLVGTQDAISAANPRVIDDSRARKLSTDLKRCTYYETCATYGLNVERVFQDVAQKVVALRKKQQLAIGPCKSLPNSPSHSAVSAASIPAVHINQATNGGGSAFSDYSSSVPSTPSISQRELRIETIAASSTPTPIRKQSKRRSNIFTSRKGADLDREKKAAECKVDSIGSGRAIPIKQGILLKRSGKSLNKEWKKKYVTLCDNGLLTYHPSLHDYMQNIHGKEIDLLRTTVKVPGKRLPRATPATAPGTSPRANGLSVERSNTQLGGGTGAPHSASSASLHSERPLSSSAWAGPRPEGLHQRSCSVSSADQWSEATTSLPPGMQHPASGPAEVLSSSPKLDPPPSPHSNRKKHRRKKSTGTPRPDGPSSATEEAEESFEFVVVSLTGQTWHFEASTAEERELWVQSVQAQILASLQGCRSAKDKTRLGNQNAALAVQAVRTVRGNSFCIDCDAPNPDWASLNLGALMCIECSGIHRHLGAHLSRVRSLDLDDWPPELLAVMTAMGNALANSVWEGALGGYSKPGPDACREEKERWIRAKYEQKLFLAPLPSSDVPLGQQLLRAVVEDDLRLLVMLLAHGSKEEVNETYGDGDGRTALHLSSAMANVVFTQLLIWYGVDVRSRDARGLTPLAYARRAGSQECADILIQHGCPGEGCGLAPTPNREPANGTNPSAELHRSPSLL</sequence>
<evidence type="ECO:0000255" key="1"/>
<evidence type="ECO:0000255" key="2">
    <source>
        <dbReference type="PROSITE-ProRule" id="PRU00145"/>
    </source>
</evidence>
<evidence type="ECO:0000255" key="3">
    <source>
        <dbReference type="PROSITE-ProRule" id="PRU00288"/>
    </source>
</evidence>
<evidence type="ECO:0000255" key="4">
    <source>
        <dbReference type="PROSITE-ProRule" id="PRU01402"/>
    </source>
</evidence>
<evidence type="ECO:0000256" key="5">
    <source>
        <dbReference type="SAM" id="MobiDB-lite"/>
    </source>
</evidence>
<evidence type="ECO:0000269" key="6">
    <source>
    </source>
</evidence>
<evidence type="ECO:0000269" key="7">
    <source>
    </source>
</evidence>
<evidence type="ECO:0000303" key="8">
    <source>
    </source>
</evidence>
<evidence type="ECO:0000303" key="9">
    <source ref="2"/>
</evidence>
<evidence type="ECO:0000303" key="10">
    <source ref="6"/>
</evidence>
<evidence type="ECO:0000305" key="11"/>
<evidence type="ECO:0007744" key="12">
    <source>
    </source>
</evidence>
<evidence type="ECO:0007744" key="13">
    <source>
    </source>
</evidence>
<evidence type="ECO:0007829" key="14">
    <source>
        <dbReference type="PDB" id="3IHW"/>
    </source>
</evidence>
<name>AGAP3_HUMAN</name>
<proteinExistence type="evidence at protein level"/>
<comment type="function">
    <text evidence="7 11">GTPase-activating protein for the ADP ribosylation factor family (Potential). GTPase which may be involved in the degradation of expanded polyglutamine proteins through the ubiquitin-proteasome pathway.</text>
</comment>
<comment type="activity regulation">
    <text evidence="7">GTPase activity is stimulated by oxidative stress.</text>
</comment>
<comment type="subunit">
    <text evidence="7">Interacts with PML. Interacts with expanded polyglutamine proteins.</text>
</comment>
<comment type="subcellular location">
    <subcellularLocation>
        <location evidence="7">Cytoplasm</location>
    </subcellularLocation>
    <text>In cells upon oxidative stress or in brains of Machado-Joseph disease patients, translocates to PML nuclear bodies.</text>
</comment>
<comment type="alternative products">
    <event type="alternative splicing"/>
    <isoform>
        <id>Q96P47-1</id>
        <name>1</name>
        <sequence type="displayed"/>
    </isoform>
    <isoform>
        <id>Q96P47-2</id>
        <name>2</name>
        <sequence type="described" ref="VSP_018534 VSP_018535"/>
    </isoform>
    <isoform>
        <id>Q96P47-3</id>
        <name>3</name>
        <sequence type="described" ref="VSP_018536 VSP_018537"/>
    </isoform>
    <isoform>
        <id>Q96P47-4</id>
        <name>4</name>
        <sequence type="described" ref="VSP_040373"/>
    </isoform>
    <isoform>
        <id>Q96P47-5</id>
        <name>5</name>
        <sequence type="described" ref="VSP_054890 VSP_054891"/>
    </isoform>
    <isoform>
        <id>Q96P47-6</id>
        <name>6</name>
        <sequence type="described" ref="VSP_040373 VSP_018536 VSP_018537"/>
    </isoform>
</comment>
<comment type="tissue specificity">
    <text evidence="6 7">Widely expressed.</text>
</comment>
<comment type="similarity">
    <text evidence="4 11">Belongs to the centaurin gamma-like family.</text>
</comment>
<protein>
    <recommendedName>
        <fullName>Arf-GAP with GTPase, ANK repeat and PH domain-containing protein 3</fullName>
        <shortName>AGAP-3</shortName>
    </recommendedName>
    <alternativeName>
        <fullName>CRAM-associated GTPase</fullName>
        <shortName>CRAG</shortName>
    </alternativeName>
    <alternativeName>
        <fullName>Centaurin-gamma-3</fullName>
        <shortName>Cnt-g3</shortName>
    </alternativeName>
    <alternativeName>
        <fullName>MR1-interacting protein</fullName>
        <shortName>MRIP-1</shortName>
    </alternativeName>
</protein>
<gene>
    <name type="primary">AGAP3</name>
    <name type="synonym">CENTG3</name>
</gene>
<keyword id="KW-0002">3D-structure</keyword>
<keyword id="KW-0025">Alternative splicing</keyword>
<keyword id="KW-0040">ANK repeat</keyword>
<keyword id="KW-0963">Cytoplasm</keyword>
<keyword id="KW-0342">GTP-binding</keyword>
<keyword id="KW-0343">GTPase activation</keyword>
<keyword id="KW-0479">Metal-binding</keyword>
<keyword id="KW-0547">Nucleotide-binding</keyword>
<keyword id="KW-0597">Phosphoprotein</keyword>
<keyword id="KW-1267">Proteomics identification</keyword>
<keyword id="KW-1185">Reference proteome</keyword>
<keyword id="KW-0677">Repeat</keyword>
<keyword id="KW-0862">Zinc</keyword>
<keyword id="KW-0863">Zinc-finger</keyword>
<organism>
    <name type="scientific">Homo sapiens</name>
    <name type="common">Human</name>
    <dbReference type="NCBI Taxonomy" id="9606"/>
    <lineage>
        <taxon>Eukaryota</taxon>
        <taxon>Metazoa</taxon>
        <taxon>Chordata</taxon>
        <taxon>Craniata</taxon>
        <taxon>Vertebrata</taxon>
        <taxon>Euteleostomi</taxon>
        <taxon>Mammalia</taxon>
        <taxon>Eutheria</taxon>
        <taxon>Euarchontoglires</taxon>
        <taxon>Primates</taxon>
        <taxon>Haplorrhini</taxon>
        <taxon>Catarrhini</taxon>
        <taxon>Hominidae</taxon>
        <taxon>Homo</taxon>
    </lineage>
</organism>
<reference key="1">
    <citation type="journal article" date="2003" name="Mol. Cell. Biol.">
        <title>GGAPs, a new family of bifunctional GTP-binding and GTPase-activating proteins.</title>
        <authorList>
            <person name="Xia C."/>
            <person name="Ma W."/>
            <person name="Stafford L.J."/>
            <person name="Liu C."/>
            <person name="Gong L."/>
            <person name="Martin J.F."/>
            <person name="Liu M."/>
        </authorList>
    </citation>
    <scope>NUCLEOTIDE SEQUENCE [MRNA] (ISOFORM 1)</scope>
    <source>
        <tissue>Heart</tissue>
    </source>
</reference>
<reference key="2">
    <citation type="submission" date="2001-08" db="EMBL/GenBank/DDBJ databases">
        <title>MRIP-1 as a member (centaurin gamma3) of the centaurin ArfGAP protein family.</title>
        <authorList>
            <person name="Hong W."/>
        </authorList>
    </citation>
    <scope>NUCLEOTIDE SEQUENCE [MRNA] (ISOFORM 2)</scope>
</reference>
<reference key="3">
    <citation type="journal article" date="2004" name="Nat. Genet.">
        <title>Complete sequencing and characterization of 21,243 full-length human cDNAs.</title>
        <authorList>
            <person name="Ota T."/>
            <person name="Suzuki Y."/>
            <person name="Nishikawa T."/>
            <person name="Otsuki T."/>
            <person name="Sugiyama T."/>
            <person name="Irie R."/>
            <person name="Wakamatsu A."/>
            <person name="Hayashi K."/>
            <person name="Sato H."/>
            <person name="Nagai K."/>
            <person name="Kimura K."/>
            <person name="Makita H."/>
            <person name="Sekine M."/>
            <person name="Obayashi M."/>
            <person name="Nishi T."/>
            <person name="Shibahara T."/>
            <person name="Tanaka T."/>
            <person name="Ishii S."/>
            <person name="Yamamoto J."/>
            <person name="Saito K."/>
            <person name="Kawai Y."/>
            <person name="Isono Y."/>
            <person name="Nakamura Y."/>
            <person name="Nagahari K."/>
            <person name="Murakami K."/>
            <person name="Yasuda T."/>
            <person name="Iwayanagi T."/>
            <person name="Wagatsuma M."/>
            <person name="Shiratori A."/>
            <person name="Sudo H."/>
            <person name="Hosoiri T."/>
            <person name="Kaku Y."/>
            <person name="Kodaira H."/>
            <person name="Kondo H."/>
            <person name="Sugawara M."/>
            <person name="Takahashi M."/>
            <person name="Kanda K."/>
            <person name="Yokoi T."/>
            <person name="Furuya T."/>
            <person name="Kikkawa E."/>
            <person name="Omura Y."/>
            <person name="Abe K."/>
            <person name="Kamihara K."/>
            <person name="Katsuta N."/>
            <person name="Sato K."/>
            <person name="Tanikawa M."/>
            <person name="Yamazaki M."/>
            <person name="Ninomiya K."/>
            <person name="Ishibashi T."/>
            <person name="Yamashita H."/>
            <person name="Murakawa K."/>
            <person name="Fujimori K."/>
            <person name="Tanai H."/>
            <person name="Kimata M."/>
            <person name="Watanabe M."/>
            <person name="Hiraoka S."/>
            <person name="Chiba Y."/>
            <person name="Ishida S."/>
            <person name="Ono Y."/>
            <person name="Takiguchi S."/>
            <person name="Watanabe S."/>
            <person name="Yosida M."/>
            <person name="Hotuta T."/>
            <person name="Kusano J."/>
            <person name="Kanehori K."/>
            <person name="Takahashi-Fujii A."/>
            <person name="Hara H."/>
            <person name="Tanase T.-O."/>
            <person name="Nomura Y."/>
            <person name="Togiya S."/>
            <person name="Komai F."/>
            <person name="Hara R."/>
            <person name="Takeuchi K."/>
            <person name="Arita M."/>
            <person name="Imose N."/>
            <person name="Musashino K."/>
            <person name="Yuuki H."/>
            <person name="Oshima A."/>
            <person name="Sasaki N."/>
            <person name="Aotsuka S."/>
            <person name="Yoshikawa Y."/>
            <person name="Matsunawa H."/>
            <person name="Ichihara T."/>
            <person name="Shiohata N."/>
            <person name="Sano S."/>
            <person name="Moriya S."/>
            <person name="Momiyama H."/>
            <person name="Satoh N."/>
            <person name="Takami S."/>
            <person name="Terashima Y."/>
            <person name="Suzuki O."/>
            <person name="Nakagawa S."/>
            <person name="Senoh A."/>
            <person name="Mizoguchi H."/>
            <person name="Goto Y."/>
            <person name="Shimizu F."/>
            <person name="Wakebe H."/>
            <person name="Hishigaki H."/>
            <person name="Watanabe T."/>
            <person name="Sugiyama A."/>
            <person name="Takemoto M."/>
            <person name="Kawakami B."/>
            <person name="Yamazaki M."/>
            <person name="Watanabe K."/>
            <person name="Kumagai A."/>
            <person name="Itakura S."/>
            <person name="Fukuzumi Y."/>
            <person name="Fujimori Y."/>
            <person name="Komiyama M."/>
            <person name="Tashiro H."/>
            <person name="Tanigami A."/>
            <person name="Fujiwara T."/>
            <person name="Ono T."/>
            <person name="Yamada K."/>
            <person name="Fujii Y."/>
            <person name="Ozaki K."/>
            <person name="Hirao M."/>
            <person name="Ohmori Y."/>
            <person name="Kawabata A."/>
            <person name="Hikiji T."/>
            <person name="Kobatake N."/>
            <person name="Inagaki H."/>
            <person name="Ikema Y."/>
            <person name="Okamoto S."/>
            <person name="Okitani R."/>
            <person name="Kawakami T."/>
            <person name="Noguchi S."/>
            <person name="Itoh T."/>
            <person name="Shigeta K."/>
            <person name="Senba T."/>
            <person name="Matsumura K."/>
            <person name="Nakajima Y."/>
            <person name="Mizuno T."/>
            <person name="Morinaga M."/>
            <person name="Sasaki M."/>
            <person name="Togashi T."/>
            <person name="Oyama M."/>
            <person name="Hata H."/>
            <person name="Watanabe M."/>
            <person name="Komatsu T."/>
            <person name="Mizushima-Sugano J."/>
            <person name="Satoh T."/>
            <person name="Shirai Y."/>
            <person name="Takahashi Y."/>
            <person name="Nakagawa K."/>
            <person name="Okumura K."/>
            <person name="Nagase T."/>
            <person name="Nomura N."/>
            <person name="Kikuchi H."/>
            <person name="Masuho Y."/>
            <person name="Yamashita R."/>
            <person name="Nakai K."/>
            <person name="Yada T."/>
            <person name="Nakamura Y."/>
            <person name="Ohara O."/>
            <person name="Isogai T."/>
            <person name="Sugano S."/>
        </authorList>
    </citation>
    <scope>NUCLEOTIDE SEQUENCE [LARGE SCALE MRNA] (ISOFORM 5)</scope>
    <source>
        <tissue>Brain</tissue>
    </source>
</reference>
<reference key="4">
    <citation type="journal article" date="2003" name="Nature">
        <title>The DNA sequence of human chromosome 7.</title>
        <authorList>
            <person name="Hillier L.W."/>
            <person name="Fulton R.S."/>
            <person name="Fulton L.A."/>
            <person name="Graves T.A."/>
            <person name="Pepin K.H."/>
            <person name="Wagner-McPherson C."/>
            <person name="Layman D."/>
            <person name="Maas J."/>
            <person name="Jaeger S."/>
            <person name="Walker R."/>
            <person name="Wylie K."/>
            <person name="Sekhon M."/>
            <person name="Becker M.C."/>
            <person name="O'Laughlin M.D."/>
            <person name="Schaller M.E."/>
            <person name="Fewell G.A."/>
            <person name="Delehaunty K.D."/>
            <person name="Miner T.L."/>
            <person name="Nash W.E."/>
            <person name="Cordes M."/>
            <person name="Du H."/>
            <person name="Sun H."/>
            <person name="Edwards J."/>
            <person name="Bradshaw-Cordum H."/>
            <person name="Ali J."/>
            <person name="Andrews S."/>
            <person name="Isak A."/>
            <person name="Vanbrunt A."/>
            <person name="Nguyen C."/>
            <person name="Du F."/>
            <person name="Lamar B."/>
            <person name="Courtney L."/>
            <person name="Kalicki J."/>
            <person name="Ozersky P."/>
            <person name="Bielicki L."/>
            <person name="Scott K."/>
            <person name="Holmes A."/>
            <person name="Harkins R."/>
            <person name="Harris A."/>
            <person name="Strong C.M."/>
            <person name="Hou S."/>
            <person name="Tomlinson C."/>
            <person name="Dauphin-Kohlberg S."/>
            <person name="Kozlowicz-Reilly A."/>
            <person name="Leonard S."/>
            <person name="Rohlfing T."/>
            <person name="Rock S.M."/>
            <person name="Tin-Wollam A.-M."/>
            <person name="Abbott A."/>
            <person name="Minx P."/>
            <person name="Maupin R."/>
            <person name="Strowmatt C."/>
            <person name="Latreille P."/>
            <person name="Miller N."/>
            <person name="Johnson D."/>
            <person name="Murray J."/>
            <person name="Woessner J.P."/>
            <person name="Wendl M.C."/>
            <person name="Yang S.-P."/>
            <person name="Schultz B.R."/>
            <person name="Wallis J.W."/>
            <person name="Spieth J."/>
            <person name="Bieri T.A."/>
            <person name="Nelson J.O."/>
            <person name="Berkowicz N."/>
            <person name="Wohldmann P.E."/>
            <person name="Cook L.L."/>
            <person name="Hickenbotham M.T."/>
            <person name="Eldred J."/>
            <person name="Williams D."/>
            <person name="Bedell J.A."/>
            <person name="Mardis E.R."/>
            <person name="Clifton S.W."/>
            <person name="Chissoe S.L."/>
            <person name="Marra M.A."/>
            <person name="Raymond C."/>
            <person name="Haugen E."/>
            <person name="Gillett W."/>
            <person name="Zhou Y."/>
            <person name="James R."/>
            <person name="Phelps K."/>
            <person name="Iadanoto S."/>
            <person name="Bubb K."/>
            <person name="Simms E."/>
            <person name="Levy R."/>
            <person name="Clendenning J."/>
            <person name="Kaul R."/>
            <person name="Kent W.J."/>
            <person name="Furey T.S."/>
            <person name="Baertsch R.A."/>
            <person name="Brent M.R."/>
            <person name="Keibler E."/>
            <person name="Flicek P."/>
            <person name="Bork P."/>
            <person name="Suyama M."/>
            <person name="Bailey J.A."/>
            <person name="Portnoy M.E."/>
            <person name="Torrents D."/>
            <person name="Chinwalla A.T."/>
            <person name="Gish W.R."/>
            <person name="Eddy S.R."/>
            <person name="McPherson J.D."/>
            <person name="Olson M.V."/>
            <person name="Eichler E.E."/>
            <person name="Green E.D."/>
            <person name="Waterston R.H."/>
            <person name="Wilson R.K."/>
        </authorList>
    </citation>
    <scope>NUCLEOTIDE SEQUENCE [LARGE SCALE GENOMIC DNA]</scope>
</reference>
<reference key="5">
    <citation type="submission" date="2005-09" db="EMBL/GenBank/DDBJ databases">
        <authorList>
            <person name="Mural R.J."/>
            <person name="Istrail S."/>
            <person name="Sutton G."/>
            <person name="Florea L."/>
            <person name="Halpern A.L."/>
            <person name="Mobarry C.M."/>
            <person name="Lippert R."/>
            <person name="Walenz B."/>
            <person name="Shatkay H."/>
            <person name="Dew I."/>
            <person name="Miller J.R."/>
            <person name="Flanigan M.J."/>
            <person name="Edwards N.J."/>
            <person name="Bolanos R."/>
            <person name="Fasulo D."/>
            <person name="Halldorsson B.V."/>
            <person name="Hannenhalli S."/>
            <person name="Turner R."/>
            <person name="Yooseph S."/>
            <person name="Lu F."/>
            <person name="Nusskern D.R."/>
            <person name="Shue B.C."/>
            <person name="Zheng X.H."/>
            <person name="Zhong F."/>
            <person name="Delcher A.L."/>
            <person name="Huson D.H."/>
            <person name="Kravitz S.A."/>
            <person name="Mouchard L."/>
            <person name="Reinert K."/>
            <person name="Remington K.A."/>
            <person name="Clark A.G."/>
            <person name="Waterman M.S."/>
            <person name="Eichler E.E."/>
            <person name="Adams M.D."/>
            <person name="Hunkapiller M.W."/>
            <person name="Myers E.W."/>
            <person name="Venter J.C."/>
        </authorList>
    </citation>
    <scope>NUCLEOTIDE SEQUENCE [LARGE SCALE GENOMIC DNA]</scope>
</reference>
<reference key="6">
    <citation type="submission" date="2005-03" db="EMBL/GenBank/DDBJ databases">
        <authorList>
            <person name="Totoki Y."/>
            <person name="Toyoda A."/>
            <person name="Takeda T."/>
            <person name="Sakaki Y."/>
            <person name="Tanaka A."/>
            <person name="Yokoyama S."/>
            <person name="Ohara O."/>
            <person name="Nagase T."/>
            <person name="Kikuno R.F."/>
        </authorList>
    </citation>
    <scope>NUCLEOTIDE SEQUENCE [LARGE SCALE MRNA] OF 45-855 (ISOFORM 3)</scope>
    <source>
        <tissue>Brain</tissue>
    </source>
</reference>
<reference key="7">
    <citation type="journal article" date="2004" name="J. Biol. Chem.">
        <title>AGAP1, a novel binding partner of nitric oxide-sensitive guanylyl cyclase.</title>
        <authorList>
            <person name="Meurer S."/>
            <person name="Pioch S."/>
            <person name="Wagner K."/>
            <person name="Mueller-Esterl W."/>
            <person name="Gross S."/>
        </authorList>
    </citation>
    <scope>TISSUE SPECIFICITY</scope>
</reference>
<reference key="8">
    <citation type="journal article" date="2006" name="J. Cell Biol.">
        <title>A novel GTPase, CRAG, mediates promyelocytic leukemia protein-associated nuclear body formation and degradation of expanded polyglutamine protein.</title>
        <authorList>
            <person name="Qin Q."/>
            <person name="Inatome R."/>
            <person name="Hotta A."/>
            <person name="Kojima M."/>
            <person name="Yamamura H."/>
            <person name="Hirai H."/>
            <person name="Yoshizawa T."/>
            <person name="Tanaka H."/>
            <person name="Fukami K."/>
            <person name="Yanagi S."/>
        </authorList>
    </citation>
    <scope>TISSUE SPECIFICITY</scope>
    <scope>SUBCELLULAR LOCATION</scope>
    <scope>INTERACTION WITH PML</scope>
    <scope>ACTIVITY REGULATION</scope>
    <scope>FUNCTION</scope>
</reference>
<reference key="9">
    <citation type="journal article" date="2006" name="Nat. Biotechnol.">
        <title>A probability-based approach for high-throughput protein phosphorylation analysis and site localization.</title>
        <authorList>
            <person name="Beausoleil S.A."/>
            <person name="Villen J."/>
            <person name="Gerber S.A."/>
            <person name="Rush J."/>
            <person name="Gygi S.P."/>
        </authorList>
    </citation>
    <scope>IDENTIFICATION BY MASS SPECTROMETRY [LARGE SCALE ANALYSIS]</scope>
    <source>
        <tissue>Cervix carcinoma</tissue>
    </source>
</reference>
<reference key="10">
    <citation type="journal article" date="2008" name="Proc. Natl. Acad. Sci. U.S.A.">
        <title>A quantitative atlas of mitotic phosphorylation.</title>
        <authorList>
            <person name="Dephoure N."/>
            <person name="Zhou C."/>
            <person name="Villen J."/>
            <person name="Beausoleil S.A."/>
            <person name="Bakalarski C.E."/>
            <person name="Elledge S.J."/>
            <person name="Gygi S.P."/>
        </authorList>
    </citation>
    <scope>PHOSPHORYLATION [LARGE SCALE ANALYSIS] AT THR-324 AND THR-326</scope>
    <scope>IDENTIFICATION BY MASS SPECTROMETRY [LARGE SCALE ANALYSIS]</scope>
    <source>
        <tissue>Cervix carcinoma</tissue>
    </source>
</reference>
<reference key="11">
    <citation type="journal article" date="2009" name="Anal. Chem.">
        <title>Lys-N and trypsin cover complementary parts of the phosphoproteome in a refined SCX-based approach.</title>
        <authorList>
            <person name="Gauci S."/>
            <person name="Helbig A.O."/>
            <person name="Slijper M."/>
            <person name="Krijgsveld J."/>
            <person name="Heck A.J."/>
            <person name="Mohammed S."/>
        </authorList>
    </citation>
    <scope>IDENTIFICATION BY MASS SPECTROMETRY [LARGE SCALE ANALYSIS]</scope>
</reference>
<reference key="12">
    <citation type="journal article" date="2013" name="J. Proteome Res.">
        <title>Toward a comprehensive characterization of a human cancer cell phosphoproteome.</title>
        <authorList>
            <person name="Zhou H."/>
            <person name="Di Palma S."/>
            <person name="Preisinger C."/>
            <person name="Peng M."/>
            <person name="Polat A.N."/>
            <person name="Heck A.J."/>
            <person name="Mohammed S."/>
        </authorList>
    </citation>
    <scope>PHOSPHORYLATION [LARGE SCALE ANALYSIS] AT THR-324; SER-443 AND SER-538</scope>
    <scope>IDENTIFICATION BY MASS SPECTROMETRY [LARGE SCALE ANALYSIS]</scope>
    <source>
        <tissue>Cervix carcinoma</tissue>
        <tissue>Erythroleukemia</tissue>
    </source>
</reference>
<reference key="13">
    <citation type="journal article" date="2014" name="J. Proteomics">
        <title>An enzyme assisted RP-RPLC approach for in-depth analysis of human liver phosphoproteome.</title>
        <authorList>
            <person name="Bian Y."/>
            <person name="Song C."/>
            <person name="Cheng K."/>
            <person name="Dong M."/>
            <person name="Wang F."/>
            <person name="Huang J."/>
            <person name="Sun D."/>
            <person name="Wang L."/>
            <person name="Ye M."/>
            <person name="Zou H."/>
        </authorList>
    </citation>
    <scope>IDENTIFICATION BY MASS SPECTROMETRY [LARGE SCALE ANALYSIS]</scope>
    <source>
        <tissue>Liver</tissue>
    </source>
</reference>
<reference key="14">
    <citation type="submission" date="2009-08" db="PDB data bank">
        <title>Crystal structure of the Ras-like domain of CENTG3.</title>
        <authorList>
            <consortium name="Structural genomics consortium (SGC)"/>
        </authorList>
    </citation>
    <scope>X-RAY CRYSTALLOGRAPHY (1.92 ANGSTROMS) OF 90-255</scope>
</reference>
<dbReference type="EMBL" id="AF359283">
    <property type="protein sequence ID" value="AAK48932.2"/>
    <property type="molecule type" value="mRNA"/>
</dbReference>
<dbReference type="EMBL" id="AF413079">
    <property type="protein sequence ID" value="AAL04173.1"/>
    <property type="molecule type" value="mRNA"/>
</dbReference>
<dbReference type="EMBL" id="AK055393">
    <property type="protein sequence ID" value="BAG51510.1"/>
    <property type="molecule type" value="mRNA"/>
</dbReference>
<dbReference type="EMBL" id="AC010973">
    <property type="status" value="NOT_ANNOTATED_CDS"/>
    <property type="molecule type" value="Genomic_DNA"/>
</dbReference>
<dbReference type="EMBL" id="CH471173">
    <property type="protein sequence ID" value="EAW54026.1"/>
    <property type="molecule type" value="Genomic_DNA"/>
</dbReference>
<dbReference type="EMBL" id="CH471173">
    <property type="protein sequence ID" value="EAW54028.1"/>
    <property type="molecule type" value="Genomic_DNA"/>
</dbReference>
<dbReference type="EMBL" id="AB209781">
    <property type="protein sequence ID" value="BAD93018.1"/>
    <property type="molecule type" value="mRNA"/>
</dbReference>
<dbReference type="CCDS" id="CCDS43681.1">
    <molecule id="Q96P47-4"/>
</dbReference>
<dbReference type="CCDS" id="CCDS55185.1">
    <molecule id="Q96P47-6"/>
</dbReference>
<dbReference type="CCDS" id="CCDS64802.1">
    <molecule id="Q96P47-5"/>
</dbReference>
<dbReference type="RefSeq" id="NP_001036000.1">
    <molecule id="Q96P47-6"/>
    <property type="nucleotide sequence ID" value="NM_001042535.4"/>
</dbReference>
<dbReference type="RefSeq" id="NP_001268229.1">
    <molecule id="Q96P47-5"/>
    <property type="nucleotide sequence ID" value="NM_001281300.2"/>
</dbReference>
<dbReference type="RefSeq" id="NP_114152.3">
    <molecule id="Q96P47-4"/>
    <property type="nucleotide sequence ID" value="NM_031946.6"/>
</dbReference>
<dbReference type="RefSeq" id="XP_016867223.1">
    <property type="nucleotide sequence ID" value="XM_017011734.1"/>
</dbReference>
<dbReference type="PDB" id="3IHW">
    <property type="method" value="X-ray"/>
    <property type="resolution" value="1.92 A"/>
    <property type="chains" value="A=90-255"/>
</dbReference>
<dbReference type="PDBsum" id="3IHW"/>
<dbReference type="SMR" id="Q96P47"/>
<dbReference type="BioGRID" id="125551">
    <property type="interactions" value="100"/>
</dbReference>
<dbReference type="FunCoup" id="Q96P47">
    <property type="interactions" value="1336"/>
</dbReference>
<dbReference type="IntAct" id="Q96P47">
    <property type="interactions" value="55"/>
</dbReference>
<dbReference type="MINT" id="Q96P47"/>
<dbReference type="STRING" id="9606.ENSP00000380413"/>
<dbReference type="GlyGen" id="Q96P47">
    <property type="glycosylation" value="1 site"/>
</dbReference>
<dbReference type="iPTMnet" id="Q96P47"/>
<dbReference type="PhosphoSitePlus" id="Q96P47"/>
<dbReference type="BioMuta" id="AGAP3"/>
<dbReference type="DMDM" id="97535922"/>
<dbReference type="jPOST" id="Q96P47"/>
<dbReference type="MassIVE" id="Q96P47"/>
<dbReference type="PaxDb" id="9606-ENSP00000380413"/>
<dbReference type="PeptideAtlas" id="Q96P47"/>
<dbReference type="ProteomicsDB" id="19042"/>
<dbReference type="ProteomicsDB" id="3514"/>
<dbReference type="ProteomicsDB" id="77618">
    <molecule id="Q96P47-1"/>
</dbReference>
<dbReference type="ProteomicsDB" id="77619">
    <molecule id="Q96P47-2"/>
</dbReference>
<dbReference type="ProteomicsDB" id="77620">
    <molecule id="Q96P47-3"/>
</dbReference>
<dbReference type="ProteomicsDB" id="77621">
    <molecule id="Q96P47-4"/>
</dbReference>
<dbReference type="Pumba" id="Q96P47"/>
<dbReference type="Antibodypedia" id="1445">
    <property type="antibodies" value="147 antibodies from 27 providers"/>
</dbReference>
<dbReference type="DNASU" id="116988"/>
<dbReference type="Ensembl" id="ENST00000397238.7">
    <molecule id="Q96P47-4"/>
    <property type="protein sequence ID" value="ENSP00000380413.2"/>
    <property type="gene ID" value="ENSG00000133612.20"/>
</dbReference>
<dbReference type="Ensembl" id="ENST00000463381.5">
    <molecule id="Q96P47-5"/>
    <property type="protein sequence ID" value="ENSP00000418016.1"/>
    <property type="gene ID" value="ENSG00000133612.20"/>
</dbReference>
<dbReference type="Ensembl" id="ENST00000473312.5">
    <molecule id="Q96P47-6"/>
    <property type="protein sequence ID" value="ENSP00000418921.1"/>
    <property type="gene ID" value="ENSG00000133612.20"/>
</dbReference>
<dbReference type="GeneID" id="116988"/>
<dbReference type="KEGG" id="hsa:116988"/>
<dbReference type="MANE-Select" id="ENST00000397238.7">
    <molecule id="Q96P47-4"/>
    <property type="protein sequence ID" value="ENSP00000380413.2"/>
    <property type="RefSeq nucleotide sequence ID" value="NM_031946.7"/>
    <property type="RefSeq protein sequence ID" value="NP_114152.3"/>
</dbReference>
<dbReference type="UCSC" id="uc003wje.3">
    <molecule id="Q96P47-1"/>
    <property type="organism name" value="human"/>
</dbReference>
<dbReference type="AGR" id="HGNC:16923"/>
<dbReference type="CTD" id="116988"/>
<dbReference type="DisGeNET" id="116988"/>
<dbReference type="GeneCards" id="AGAP3"/>
<dbReference type="HGNC" id="HGNC:16923">
    <property type="gene designation" value="AGAP3"/>
</dbReference>
<dbReference type="HPA" id="ENSG00000133612">
    <property type="expression patterns" value="Tissue enhanced (brain)"/>
</dbReference>
<dbReference type="neXtProt" id="NX_Q96P47"/>
<dbReference type="OpenTargets" id="ENSG00000133612"/>
<dbReference type="PharmGKB" id="PA26413"/>
<dbReference type="VEuPathDB" id="HostDB:ENSG00000133612"/>
<dbReference type="eggNOG" id="KOG0705">
    <property type="taxonomic scope" value="Eukaryota"/>
</dbReference>
<dbReference type="GeneTree" id="ENSGT00940000159586"/>
<dbReference type="HOGENOM" id="CLU_007326_4_0_1"/>
<dbReference type="InParanoid" id="Q96P47"/>
<dbReference type="OMA" id="KHRWKKS"/>
<dbReference type="OrthoDB" id="6136903at2759"/>
<dbReference type="PAN-GO" id="Q96P47">
    <property type="GO annotations" value="4 GO annotations based on evolutionary models"/>
</dbReference>
<dbReference type="PhylomeDB" id="Q96P47"/>
<dbReference type="TreeFam" id="TF317762"/>
<dbReference type="PathwayCommons" id="Q96P47"/>
<dbReference type="SignaLink" id="Q96P47"/>
<dbReference type="BioGRID-ORCS" id="116988">
    <property type="hits" value="13 hits in 1154 CRISPR screens"/>
</dbReference>
<dbReference type="CD-CODE" id="FB4E32DD">
    <property type="entry name" value="Presynaptic clusters and postsynaptic densities"/>
</dbReference>
<dbReference type="ChiTaRS" id="AGAP3">
    <property type="organism name" value="human"/>
</dbReference>
<dbReference type="EvolutionaryTrace" id="Q96P47"/>
<dbReference type="GeneWiki" id="CENTG3"/>
<dbReference type="GenomeRNAi" id="116988"/>
<dbReference type="Pharos" id="Q96P47">
    <property type="development level" value="Tbio"/>
</dbReference>
<dbReference type="PRO" id="PR:Q96P47"/>
<dbReference type="Proteomes" id="UP000005640">
    <property type="component" value="Chromosome 7"/>
</dbReference>
<dbReference type="RNAct" id="Q96P47">
    <property type="molecule type" value="protein"/>
</dbReference>
<dbReference type="Bgee" id="ENSG00000133612">
    <property type="expression patterns" value="Expressed in right hemisphere of cerebellum and 180 other cell types or tissues"/>
</dbReference>
<dbReference type="ExpressionAtlas" id="Q96P47">
    <property type="expression patterns" value="baseline and differential"/>
</dbReference>
<dbReference type="GO" id="GO:0071944">
    <property type="term" value="C:cell periphery"/>
    <property type="evidence" value="ECO:0000266"/>
    <property type="project" value="UniProtKB"/>
</dbReference>
<dbReference type="GO" id="GO:0005737">
    <property type="term" value="C:cytoplasm"/>
    <property type="evidence" value="ECO:0000266"/>
    <property type="project" value="UniProtKB"/>
</dbReference>
<dbReference type="GO" id="GO:0098978">
    <property type="term" value="C:glutamatergic synapse"/>
    <property type="evidence" value="ECO:0007669"/>
    <property type="project" value="Ensembl"/>
</dbReference>
<dbReference type="GO" id="GO:0005634">
    <property type="term" value="C:nucleus"/>
    <property type="evidence" value="ECO:0000266"/>
    <property type="project" value="UniProtKB"/>
</dbReference>
<dbReference type="GO" id="GO:0014069">
    <property type="term" value="C:postsynaptic density"/>
    <property type="evidence" value="ECO:0007669"/>
    <property type="project" value="Ensembl"/>
</dbReference>
<dbReference type="GO" id="GO:0005525">
    <property type="term" value="F:GTP binding"/>
    <property type="evidence" value="ECO:0007669"/>
    <property type="project" value="UniProtKB-KW"/>
</dbReference>
<dbReference type="GO" id="GO:0005096">
    <property type="term" value="F:GTPase activator activity"/>
    <property type="evidence" value="ECO:0000318"/>
    <property type="project" value="GO_Central"/>
</dbReference>
<dbReference type="GO" id="GO:0003924">
    <property type="term" value="F:GTPase activity"/>
    <property type="evidence" value="ECO:0000266"/>
    <property type="project" value="UniProtKB"/>
</dbReference>
<dbReference type="GO" id="GO:0031593">
    <property type="term" value="F:polyubiquitin modification-dependent protein binding"/>
    <property type="evidence" value="ECO:0000266"/>
    <property type="project" value="UniProtKB"/>
</dbReference>
<dbReference type="GO" id="GO:0008270">
    <property type="term" value="F:zinc ion binding"/>
    <property type="evidence" value="ECO:0007669"/>
    <property type="project" value="UniProtKB-KW"/>
</dbReference>
<dbReference type="GO" id="GO:0034614">
    <property type="term" value="P:cellular response to reactive oxygen species"/>
    <property type="evidence" value="ECO:0000266"/>
    <property type="project" value="UniProtKB"/>
</dbReference>
<dbReference type="GO" id="GO:0043161">
    <property type="term" value="P:proteasome-mediated ubiquitin-dependent protein catabolic process"/>
    <property type="evidence" value="ECO:0000266"/>
    <property type="project" value="UniProtKB"/>
</dbReference>
<dbReference type="GO" id="GO:0099072">
    <property type="term" value="P:regulation of postsynaptic membrane neurotransmitter receptor levels"/>
    <property type="evidence" value="ECO:0007669"/>
    <property type="project" value="Ensembl"/>
</dbReference>
<dbReference type="CDD" id="cd08855">
    <property type="entry name" value="ArfGap_AGAP3"/>
    <property type="match status" value="1"/>
</dbReference>
<dbReference type="CDD" id="cd04103">
    <property type="entry name" value="Centaurin_gamma"/>
    <property type="match status" value="1"/>
</dbReference>
<dbReference type="CDD" id="cd01250">
    <property type="entry name" value="PH_AGAP"/>
    <property type="match status" value="1"/>
</dbReference>
<dbReference type="FunFam" id="1.10.220.150:FF:000001">
    <property type="entry name" value="Arf-GAP with GTPase, ANK repeat and PH domain-containing protein 1"/>
    <property type="match status" value="1"/>
</dbReference>
<dbReference type="FunFam" id="2.30.29.30:FF:000077">
    <property type="entry name" value="Arf-GAP with GTPase, ANK repeat and PH domain-containing protein 1"/>
    <property type="match status" value="1"/>
</dbReference>
<dbReference type="FunFam" id="3.40.50.300:FF:000178">
    <property type="entry name" value="Arf-GAP with GTPase, ANK repeat and PH domain-containing protein 1"/>
    <property type="match status" value="1"/>
</dbReference>
<dbReference type="FunFam" id="1.25.40.20:FF:000038">
    <property type="entry name" value="Arf-GAP with GTPase, ANK repeat and PH domain-containing protein 3"/>
    <property type="match status" value="1"/>
</dbReference>
<dbReference type="FunFam" id="2.30.29.30:FF:000199">
    <property type="entry name" value="Arf-GAP with GTPase, ANK repeat and PH domain-containing protein 3"/>
    <property type="match status" value="1"/>
</dbReference>
<dbReference type="Gene3D" id="1.25.40.20">
    <property type="entry name" value="Ankyrin repeat-containing domain"/>
    <property type="match status" value="1"/>
</dbReference>
<dbReference type="Gene3D" id="1.10.220.150">
    <property type="entry name" value="Arf GTPase activating protein"/>
    <property type="match status" value="1"/>
</dbReference>
<dbReference type="Gene3D" id="3.40.50.300">
    <property type="entry name" value="P-loop containing nucleotide triphosphate hydrolases"/>
    <property type="match status" value="1"/>
</dbReference>
<dbReference type="Gene3D" id="2.30.29.30">
    <property type="entry name" value="Pleckstrin-homology domain (PH domain)/Phosphotyrosine-binding domain (PTB)"/>
    <property type="match status" value="2"/>
</dbReference>
<dbReference type="InterPro" id="IPR002110">
    <property type="entry name" value="Ankyrin_rpt"/>
</dbReference>
<dbReference type="InterPro" id="IPR036770">
    <property type="entry name" value="Ankyrin_rpt-contain_sf"/>
</dbReference>
<dbReference type="InterPro" id="IPR051282">
    <property type="entry name" value="Arf-GAP_GTPase_ANK_PH"/>
</dbReference>
<dbReference type="InterPro" id="IPR037278">
    <property type="entry name" value="ARFGAP/RecO"/>
</dbReference>
<dbReference type="InterPro" id="IPR001164">
    <property type="entry name" value="ArfGAP_dom"/>
</dbReference>
<dbReference type="InterPro" id="IPR038508">
    <property type="entry name" value="ArfGAP_dom_sf"/>
</dbReference>
<dbReference type="InterPro" id="IPR027417">
    <property type="entry name" value="P-loop_NTPase"/>
</dbReference>
<dbReference type="InterPro" id="IPR011993">
    <property type="entry name" value="PH-like_dom_sf"/>
</dbReference>
<dbReference type="InterPro" id="IPR001849">
    <property type="entry name" value="PH_domain"/>
</dbReference>
<dbReference type="InterPro" id="IPR001806">
    <property type="entry name" value="Small_GTPase"/>
</dbReference>
<dbReference type="PANTHER" id="PTHR45819:SF2">
    <property type="entry name" value="ARF-GAP WITH GTPASE, ANK REPEAT AND PH DOMAIN-CONTAINING PROTEIN 3"/>
    <property type="match status" value="1"/>
</dbReference>
<dbReference type="PANTHER" id="PTHR45819">
    <property type="entry name" value="CENTAURIN-GAMMA-1A"/>
    <property type="match status" value="1"/>
</dbReference>
<dbReference type="Pfam" id="PF12796">
    <property type="entry name" value="Ank_2"/>
    <property type="match status" value="1"/>
</dbReference>
<dbReference type="Pfam" id="PF01412">
    <property type="entry name" value="ArfGap"/>
    <property type="match status" value="1"/>
</dbReference>
<dbReference type="Pfam" id="PF00071">
    <property type="entry name" value="Ras"/>
    <property type="match status" value="1"/>
</dbReference>
<dbReference type="PRINTS" id="PR00405">
    <property type="entry name" value="REVINTRACTNG"/>
</dbReference>
<dbReference type="SMART" id="SM00105">
    <property type="entry name" value="ArfGap"/>
    <property type="match status" value="1"/>
</dbReference>
<dbReference type="SMART" id="SM00233">
    <property type="entry name" value="PH"/>
    <property type="match status" value="1"/>
</dbReference>
<dbReference type="SMART" id="SM00175">
    <property type="entry name" value="RAB"/>
    <property type="match status" value="1"/>
</dbReference>
<dbReference type="SMART" id="SM00173">
    <property type="entry name" value="RAS"/>
    <property type="match status" value="1"/>
</dbReference>
<dbReference type="SUPFAM" id="SSF48403">
    <property type="entry name" value="Ankyrin repeat"/>
    <property type="match status" value="1"/>
</dbReference>
<dbReference type="SUPFAM" id="SSF57863">
    <property type="entry name" value="ArfGap/RecO-like zinc finger"/>
    <property type="match status" value="1"/>
</dbReference>
<dbReference type="SUPFAM" id="SSF52540">
    <property type="entry name" value="P-loop containing nucleoside triphosphate hydrolases"/>
    <property type="match status" value="1"/>
</dbReference>
<dbReference type="SUPFAM" id="SSF50729">
    <property type="entry name" value="PH domain-like"/>
    <property type="match status" value="1"/>
</dbReference>
<dbReference type="PROSITE" id="PS50297">
    <property type="entry name" value="ANK_REP_REGION"/>
    <property type="match status" value="1"/>
</dbReference>
<dbReference type="PROSITE" id="PS50088">
    <property type="entry name" value="ANK_REPEAT"/>
    <property type="match status" value="1"/>
</dbReference>
<dbReference type="PROSITE" id="PS50115">
    <property type="entry name" value="ARFGAP"/>
    <property type="match status" value="1"/>
</dbReference>
<dbReference type="PROSITE" id="PS52057">
    <property type="entry name" value="GLD"/>
    <property type="match status" value="1"/>
</dbReference>
<dbReference type="PROSITE" id="PS50003">
    <property type="entry name" value="PH_DOMAIN"/>
    <property type="match status" value="1"/>
</dbReference>
<accession>Q96P47</accession>
<accession>B3KNZ8</accession>
<accession>E9PAL8</accession>
<accession>Q59EN0</accession>
<accession>Q96RK3</accession>
<feature type="chain" id="PRO_0000074220" description="Arf-GAP with GTPase, ANK repeat and PH domain-containing protein 3">
    <location>
        <begin position="1"/>
        <end position="875"/>
    </location>
</feature>
<feature type="domain" description="GLD" evidence="4">
    <location>
        <begin position="87"/>
        <end position="261"/>
    </location>
</feature>
<feature type="domain" description="PH" evidence="2">
    <location>
        <begin position="367"/>
        <end position="605"/>
    </location>
</feature>
<feature type="domain" description="Arf-GAP" evidence="3">
    <location>
        <begin position="626"/>
        <end position="746"/>
    </location>
</feature>
<feature type="repeat" description="ANK 1">
    <location>
        <begin position="748"/>
        <end position="777"/>
    </location>
</feature>
<feature type="repeat" description="ANK 2">
    <location>
        <begin position="785"/>
        <end position="814"/>
    </location>
</feature>
<feature type="repeat" description="ANK 3">
    <location>
        <begin position="818"/>
        <end position="847"/>
    </location>
</feature>
<feature type="zinc finger region" description="C4-type" evidence="3">
    <location>
        <begin position="641"/>
        <end position="664"/>
    </location>
</feature>
<feature type="region of interest" description="Disordered" evidence="5">
    <location>
        <begin position="1"/>
        <end position="23"/>
    </location>
</feature>
<feature type="region of interest" description="Small GTPase-like">
    <location>
        <begin position="84"/>
        <end position="375"/>
    </location>
</feature>
<feature type="region of interest" description="Disordered" evidence="5">
    <location>
        <begin position="428"/>
        <end position="568"/>
    </location>
</feature>
<feature type="region of interest" description="Disordered" evidence="5">
    <location>
        <begin position="853"/>
        <end position="875"/>
    </location>
</feature>
<feature type="compositionally biased region" description="Low complexity" evidence="5">
    <location>
        <begin position="10"/>
        <end position="23"/>
    </location>
</feature>
<feature type="compositionally biased region" description="Polar residues" evidence="5">
    <location>
        <begin position="495"/>
        <end position="512"/>
    </location>
</feature>
<feature type="compositionally biased region" description="Basic residues" evidence="5">
    <location>
        <begin position="541"/>
        <end position="551"/>
    </location>
</feature>
<feature type="binding site" evidence="1">
    <location>
        <begin position="98"/>
        <end position="105"/>
    </location>
    <ligand>
        <name>GTP</name>
        <dbReference type="ChEBI" id="CHEBI:37565"/>
    </ligand>
</feature>
<feature type="binding site" evidence="1">
    <location>
        <begin position="142"/>
        <end position="146"/>
    </location>
    <ligand>
        <name>GTP</name>
        <dbReference type="ChEBI" id="CHEBI:37565"/>
    </ligand>
</feature>
<feature type="binding site" evidence="1">
    <location>
        <begin position="198"/>
        <end position="201"/>
    </location>
    <ligand>
        <name>GTP</name>
        <dbReference type="ChEBI" id="CHEBI:37565"/>
    </ligand>
</feature>
<feature type="modified residue" description="Phosphothreonine" evidence="12 13">
    <location>
        <position position="324"/>
    </location>
</feature>
<feature type="modified residue" description="Phosphothreonine" evidence="12">
    <location>
        <position position="326"/>
    </location>
</feature>
<feature type="modified residue" description="Phosphoserine" evidence="13">
    <location>
        <position position="443"/>
    </location>
</feature>
<feature type="modified residue" description="Phosphoserine" evidence="13">
    <location>
        <position position="538"/>
    </location>
</feature>
<feature type="splice variant" id="VSP_054890" description="In isoform 5." evidence="8">
    <location>
        <begin position="1"/>
        <end position="192"/>
    </location>
</feature>
<feature type="splice variant" id="VSP_018534" description="In isoform 2." evidence="9">
    <original>MNFQ</original>
    <variation>MFGGAGPG</variation>
    <location>
        <begin position="1"/>
        <end position="4"/>
    </location>
</feature>
<feature type="splice variant" id="VSP_018535" description="In isoform 2." evidence="9">
    <original>QSPQQQQ</original>
    <variation>GPSQ</variation>
    <location>
        <begin position="9"/>
        <end position="15"/>
    </location>
</feature>
<feature type="splice variant" id="VSP_040373" description="In isoform 4 and isoform 6." evidence="11">
    <original>Q</original>
    <variation>QSLAAPGGGGAAAQQLVCGGQFGGAGPGAGGGGGPSQ</variation>
    <location>
        <position position="15"/>
    </location>
</feature>
<feature type="splice variant" id="VSP_018536" description="In isoform 3 and isoform 6." evidence="10">
    <original>SRKGADLDREKKAAECKVDS</original>
    <variation>ICATVSNFSSTKRPFQLLPN</variation>
    <location>
        <begin position="341"/>
        <end position="360"/>
    </location>
</feature>
<feature type="splice variant" id="VSP_018537" description="In isoform 3 and isoform 6." evidence="10">
    <location>
        <begin position="361"/>
        <end position="875"/>
    </location>
</feature>
<feature type="splice variant" id="VSP_054891" description="In isoform 5." evidence="8">
    <location>
        <begin position="463"/>
        <end position="565"/>
    </location>
</feature>
<feature type="strand" evidence="14">
    <location>
        <begin position="91"/>
        <end position="97"/>
    </location>
</feature>
<feature type="helix" evidence="14">
    <location>
        <begin position="104"/>
        <end position="113"/>
    </location>
</feature>
<feature type="strand" evidence="14">
    <location>
        <begin position="125"/>
        <end position="133"/>
    </location>
</feature>
<feature type="strand" evidence="14">
    <location>
        <begin position="136"/>
        <end position="144"/>
    </location>
</feature>
<feature type="strand" evidence="14">
    <location>
        <begin position="146"/>
        <end position="148"/>
    </location>
</feature>
<feature type="helix" evidence="14">
    <location>
        <begin position="151"/>
        <end position="156"/>
    </location>
</feature>
<feature type="strand" evidence="14">
    <location>
        <begin position="158"/>
        <end position="165"/>
    </location>
</feature>
<feature type="helix" evidence="14">
    <location>
        <begin position="169"/>
        <end position="183"/>
    </location>
</feature>
<feature type="helix" evidence="14">
    <location>
        <begin position="188"/>
        <end position="190"/>
    </location>
</feature>
<feature type="strand" evidence="14">
    <location>
        <begin position="193"/>
        <end position="198"/>
    </location>
</feature>
<feature type="helix" evidence="14">
    <location>
        <begin position="212"/>
        <end position="221"/>
    </location>
</feature>
<feature type="turn" evidence="14">
    <location>
        <begin position="222"/>
        <end position="224"/>
    </location>
</feature>
<feature type="strand" evidence="14">
    <location>
        <begin position="226"/>
        <end position="231"/>
    </location>
</feature>
<feature type="turn" evidence="14">
    <location>
        <begin position="232"/>
        <end position="235"/>
    </location>
</feature>
<feature type="helix" evidence="14">
    <location>
        <begin position="238"/>
        <end position="252"/>
    </location>
</feature>